<reference key="1">
    <citation type="journal article" date="2001" name="Lancet">
        <title>Whole genome sequencing of meticillin-resistant Staphylococcus aureus.</title>
        <authorList>
            <person name="Kuroda M."/>
            <person name="Ohta T."/>
            <person name="Uchiyama I."/>
            <person name="Baba T."/>
            <person name="Yuzawa H."/>
            <person name="Kobayashi I."/>
            <person name="Cui L."/>
            <person name="Oguchi A."/>
            <person name="Aoki K."/>
            <person name="Nagai Y."/>
            <person name="Lian J.-Q."/>
            <person name="Ito T."/>
            <person name="Kanamori M."/>
            <person name="Matsumaru H."/>
            <person name="Maruyama A."/>
            <person name="Murakami H."/>
            <person name="Hosoyama A."/>
            <person name="Mizutani-Ui Y."/>
            <person name="Takahashi N.K."/>
            <person name="Sawano T."/>
            <person name="Inoue R."/>
            <person name="Kaito C."/>
            <person name="Sekimizu K."/>
            <person name="Hirakawa H."/>
            <person name="Kuhara S."/>
            <person name="Goto S."/>
            <person name="Yabuzaki J."/>
            <person name="Kanehisa M."/>
            <person name="Yamashita A."/>
            <person name="Oshima K."/>
            <person name="Furuya K."/>
            <person name="Yoshino C."/>
            <person name="Shiba T."/>
            <person name="Hattori M."/>
            <person name="Ogasawara N."/>
            <person name="Hayashi H."/>
            <person name="Hiramatsu K."/>
        </authorList>
    </citation>
    <scope>NUCLEOTIDE SEQUENCE [LARGE SCALE GENOMIC DNA]</scope>
    <source>
        <strain>Mu50 / ATCC 700699</strain>
    </source>
</reference>
<reference key="2">
    <citation type="journal article" date="2017" name="ACS Chem. Biol.">
        <title>Identification of a novel epoxyqueuosine reductase family by comparative genomics.</title>
        <authorList>
            <person name="Zallot R."/>
            <person name="Ross R."/>
            <person name="Chen W.H."/>
            <person name="Bruner S.D."/>
            <person name="Limbach P.A."/>
            <person name="de Crecy-Lagard V."/>
        </authorList>
    </citation>
    <scope>FUNCTION</scope>
    <scope>CATALYTIC ACTIVITY</scope>
    <scope>PATHWAY</scope>
    <scope>3D-STRUCTURE MODELING</scope>
    <source>
        <strain>Mu50 / ATCC 700699</strain>
    </source>
</reference>
<dbReference type="EC" id="1.17.99.6" evidence="1 5"/>
<dbReference type="EMBL" id="BA000017">
    <property type="protein sequence ID" value="BAB58753.1"/>
    <property type="molecule type" value="Genomic_DNA"/>
</dbReference>
<dbReference type="RefSeq" id="WP_000606210.1">
    <property type="nucleotide sequence ID" value="NC_002758.2"/>
</dbReference>
<dbReference type="SMR" id="A0A0H3JUG6"/>
<dbReference type="KEGG" id="sav:SAV2591"/>
<dbReference type="HOGENOM" id="CLU_088177_1_0_9"/>
<dbReference type="PhylomeDB" id="A0A0H3JUG6"/>
<dbReference type="UniPathway" id="UPA00392"/>
<dbReference type="Proteomes" id="UP000002481">
    <property type="component" value="Chromosome"/>
</dbReference>
<dbReference type="GO" id="GO:0051539">
    <property type="term" value="F:4 iron, 4 sulfur cluster binding"/>
    <property type="evidence" value="ECO:0007669"/>
    <property type="project" value="UniProtKB-UniRule"/>
</dbReference>
<dbReference type="GO" id="GO:0052693">
    <property type="term" value="F:epoxyqueuosine reductase activity"/>
    <property type="evidence" value="ECO:0007669"/>
    <property type="project" value="UniProtKB-UniRule"/>
</dbReference>
<dbReference type="GO" id="GO:0046872">
    <property type="term" value="F:metal ion binding"/>
    <property type="evidence" value="ECO:0007669"/>
    <property type="project" value="UniProtKB-KW"/>
</dbReference>
<dbReference type="GO" id="GO:0008616">
    <property type="term" value="P:queuosine biosynthetic process"/>
    <property type="evidence" value="ECO:0007669"/>
    <property type="project" value="UniProtKB-UniRule"/>
</dbReference>
<dbReference type="GO" id="GO:0006400">
    <property type="term" value="P:tRNA modification"/>
    <property type="evidence" value="ECO:0007669"/>
    <property type="project" value="UniProtKB-UniRule"/>
</dbReference>
<dbReference type="HAMAP" id="MF_02089">
    <property type="entry name" value="QueH"/>
    <property type="match status" value="1"/>
</dbReference>
<dbReference type="InterPro" id="IPR003828">
    <property type="entry name" value="QueH"/>
</dbReference>
<dbReference type="PANTHER" id="PTHR36701">
    <property type="entry name" value="EPOXYQUEUOSINE REDUCTASE QUEH"/>
    <property type="match status" value="1"/>
</dbReference>
<dbReference type="PANTHER" id="PTHR36701:SF1">
    <property type="entry name" value="EPOXYQUEUOSINE REDUCTASE QUEH"/>
    <property type="match status" value="1"/>
</dbReference>
<dbReference type="Pfam" id="PF02677">
    <property type="entry name" value="QueH"/>
    <property type="match status" value="1"/>
</dbReference>
<keyword id="KW-0004">4Fe-4S</keyword>
<keyword id="KW-1015">Disulfide bond</keyword>
<keyword id="KW-0408">Iron</keyword>
<keyword id="KW-0411">Iron-sulfur</keyword>
<keyword id="KW-0479">Metal-binding</keyword>
<keyword id="KW-0560">Oxidoreductase</keyword>
<keyword id="KW-0671">Queuosine biosynthesis</keyword>
<keyword id="KW-0676">Redox-active center</keyword>
<keyword id="KW-0819">tRNA processing</keyword>
<comment type="function">
    <text evidence="1 2">Catalyzes the conversion of epoxyqueuosine (oQ) to queuosine (Q), which is a hypermodified base found in the wobble positions of tRNA(Asp), tRNA(Asn), tRNA(His) and tRNA(Tyr).</text>
</comment>
<comment type="catalytic activity">
    <reaction evidence="1 5">
        <text>epoxyqueuosine(34) in tRNA + AH2 = queuosine(34) in tRNA + A + H2O</text>
        <dbReference type="Rhea" id="RHEA:32159"/>
        <dbReference type="Rhea" id="RHEA-COMP:18571"/>
        <dbReference type="Rhea" id="RHEA-COMP:18582"/>
        <dbReference type="ChEBI" id="CHEBI:13193"/>
        <dbReference type="ChEBI" id="CHEBI:15377"/>
        <dbReference type="ChEBI" id="CHEBI:17499"/>
        <dbReference type="ChEBI" id="CHEBI:194431"/>
        <dbReference type="ChEBI" id="CHEBI:194443"/>
        <dbReference type="EC" id="1.17.99.6"/>
    </reaction>
</comment>
<comment type="pathway">
    <text evidence="1 5">tRNA modification; tRNA-queuosine biosynthesis.</text>
</comment>
<comment type="similarity">
    <text evidence="1 4">Belongs to the QueH family.</text>
</comment>
<proteinExistence type="evidence at protein level"/>
<protein>
    <recommendedName>
        <fullName evidence="1 3">Epoxyqueuosine reductase QueH</fullName>
        <ecNumber evidence="1 5">1.17.99.6</ecNumber>
    </recommendedName>
    <alternativeName>
        <fullName evidence="1 4">Queuosine biosynthesis protein QueH</fullName>
    </alternativeName>
</protein>
<accession>A0A0H3JUG6</accession>
<name>QUEH_STAAM</name>
<sequence length="240" mass="27789">MINAEPIISKMKNQKINYDKVLKKLIGQWEREAIRPKILLHSCCAPCSTYTLEFLTQYADIAIYFANSNIHPKNEYLRRAKVQEQFVEDFNRKTGANVKYIEAPYEPHKFVKMVKDKELADEKEGGLRCTACFEMRLDIVAKAAVEHGYDYFGSAITLSPKKNAQLINELGMDVQKIYDVNYLPSDFKKSKGYERSIEMCNDYNIFRQCYCGCVFAAMQQGIDFKTVNKEAKAFLEQYPD</sequence>
<gene>
    <name evidence="1 3" type="primary">queH</name>
    <name evidence="6" type="ordered locus">SAV2591</name>
</gene>
<evidence type="ECO:0000255" key="1">
    <source>
        <dbReference type="HAMAP-Rule" id="MF_02089"/>
    </source>
</evidence>
<evidence type="ECO:0000269" key="2">
    <source>
    </source>
</evidence>
<evidence type="ECO:0000303" key="3">
    <source>
    </source>
</evidence>
<evidence type="ECO:0000305" key="4"/>
<evidence type="ECO:0000305" key="5">
    <source>
    </source>
</evidence>
<evidence type="ECO:0000312" key="6">
    <source>
        <dbReference type="EMBL" id="BAB58753.1"/>
    </source>
</evidence>
<organism>
    <name type="scientific">Staphylococcus aureus (strain Mu50 / ATCC 700699)</name>
    <dbReference type="NCBI Taxonomy" id="158878"/>
    <lineage>
        <taxon>Bacteria</taxon>
        <taxon>Bacillati</taxon>
        <taxon>Bacillota</taxon>
        <taxon>Bacilli</taxon>
        <taxon>Bacillales</taxon>
        <taxon>Staphylococcaceae</taxon>
        <taxon>Staphylococcus</taxon>
    </lineage>
</organism>
<feature type="chain" id="PRO_0000439903" description="Epoxyqueuosine reductase QueH">
    <location>
        <begin position="1"/>
        <end position="240"/>
    </location>
</feature>
<feature type="binding site" evidence="1 5">
    <location>
        <position position="43"/>
    </location>
    <ligand>
        <name>[4Fe-4S] cluster</name>
        <dbReference type="ChEBI" id="CHEBI:49883"/>
    </ligand>
</feature>
<feature type="binding site" evidence="1 5">
    <location>
        <position position="44"/>
    </location>
    <ligand>
        <name>[4Fe-4S] cluster</name>
        <dbReference type="ChEBI" id="CHEBI:49883"/>
    </ligand>
</feature>
<feature type="binding site" evidence="1 5">
    <location>
        <position position="129"/>
    </location>
    <ligand>
        <name>[4Fe-4S] cluster</name>
        <dbReference type="ChEBI" id="CHEBI:49883"/>
    </ligand>
</feature>
<feature type="binding site" evidence="1 5">
    <location>
        <position position="132"/>
    </location>
    <ligand>
        <name>[4Fe-4S] cluster</name>
        <dbReference type="ChEBI" id="CHEBI:49883"/>
    </ligand>
</feature>
<feature type="disulfide bond" description="Redox-active" evidence="1 5">
    <location>
        <begin position="211"/>
        <end position="213"/>
    </location>
</feature>